<keyword id="KW-0067">ATP-binding</keyword>
<keyword id="KW-0963">Cytoplasm</keyword>
<keyword id="KW-0329">Glyoxylate bypass</keyword>
<keyword id="KW-0378">Hydrolase</keyword>
<keyword id="KW-0418">Kinase</keyword>
<keyword id="KW-0547">Nucleotide-binding</keyword>
<keyword id="KW-0904">Protein phosphatase</keyword>
<keyword id="KW-0723">Serine/threonine-protein kinase</keyword>
<keyword id="KW-0808">Transferase</keyword>
<keyword id="KW-0816">Tricarboxylic acid cycle</keyword>
<dbReference type="EC" id="2.7.11.5" evidence="1"/>
<dbReference type="EC" id="3.1.3.-" evidence="1"/>
<dbReference type="EMBL" id="CP000124">
    <property type="protein sequence ID" value="ABA49915.1"/>
    <property type="molecule type" value="Genomic_DNA"/>
</dbReference>
<dbReference type="RefSeq" id="WP_004525974.1">
    <property type="nucleotide sequence ID" value="NC_007434.1"/>
</dbReference>
<dbReference type="SMR" id="Q3JWQ8"/>
<dbReference type="EnsemblBacteria" id="ABA49915">
    <property type="protein sequence ID" value="ABA49915"/>
    <property type="gene ID" value="BURPS1710b_0581"/>
</dbReference>
<dbReference type="GeneID" id="93058891"/>
<dbReference type="KEGG" id="bpm:BURPS1710b_0581"/>
<dbReference type="HOGENOM" id="CLU_033804_1_1_4"/>
<dbReference type="Proteomes" id="UP000002700">
    <property type="component" value="Chromosome I"/>
</dbReference>
<dbReference type="GO" id="GO:0005737">
    <property type="term" value="C:cytoplasm"/>
    <property type="evidence" value="ECO:0007669"/>
    <property type="project" value="UniProtKB-SubCell"/>
</dbReference>
<dbReference type="GO" id="GO:0008772">
    <property type="term" value="F:[isocitrate dehydrogenase (NADP+)] kinase activity"/>
    <property type="evidence" value="ECO:0007669"/>
    <property type="project" value="UniProtKB-UniRule"/>
</dbReference>
<dbReference type="GO" id="GO:0016208">
    <property type="term" value="F:AMP binding"/>
    <property type="evidence" value="ECO:0007669"/>
    <property type="project" value="TreeGrafter"/>
</dbReference>
<dbReference type="GO" id="GO:0005524">
    <property type="term" value="F:ATP binding"/>
    <property type="evidence" value="ECO:0007669"/>
    <property type="project" value="UniProtKB-UniRule"/>
</dbReference>
<dbReference type="GO" id="GO:0004721">
    <property type="term" value="F:phosphoprotein phosphatase activity"/>
    <property type="evidence" value="ECO:0007669"/>
    <property type="project" value="UniProtKB-KW"/>
</dbReference>
<dbReference type="GO" id="GO:0004674">
    <property type="term" value="F:protein serine/threonine kinase activity"/>
    <property type="evidence" value="ECO:0007669"/>
    <property type="project" value="UniProtKB-KW"/>
</dbReference>
<dbReference type="GO" id="GO:0006006">
    <property type="term" value="P:glucose metabolic process"/>
    <property type="evidence" value="ECO:0007669"/>
    <property type="project" value="InterPro"/>
</dbReference>
<dbReference type="GO" id="GO:0006097">
    <property type="term" value="P:glyoxylate cycle"/>
    <property type="evidence" value="ECO:0007669"/>
    <property type="project" value="UniProtKB-UniRule"/>
</dbReference>
<dbReference type="GO" id="GO:0006099">
    <property type="term" value="P:tricarboxylic acid cycle"/>
    <property type="evidence" value="ECO:0007669"/>
    <property type="project" value="UniProtKB-UniRule"/>
</dbReference>
<dbReference type="HAMAP" id="MF_00747">
    <property type="entry name" value="AceK"/>
    <property type="match status" value="1"/>
</dbReference>
<dbReference type="InterPro" id="IPR046855">
    <property type="entry name" value="AceK_kinase"/>
</dbReference>
<dbReference type="InterPro" id="IPR046854">
    <property type="entry name" value="AceK_regulatory"/>
</dbReference>
<dbReference type="InterPro" id="IPR010452">
    <property type="entry name" value="Isocitrate_DH_AceK"/>
</dbReference>
<dbReference type="NCBIfam" id="NF002804">
    <property type="entry name" value="PRK02946.1"/>
    <property type="match status" value="1"/>
</dbReference>
<dbReference type="PANTHER" id="PTHR39559">
    <property type="match status" value="1"/>
</dbReference>
<dbReference type="PANTHER" id="PTHR39559:SF1">
    <property type="entry name" value="ISOCITRATE DEHYDROGENASE KINASE_PHOSPHATASE"/>
    <property type="match status" value="1"/>
</dbReference>
<dbReference type="Pfam" id="PF06315">
    <property type="entry name" value="AceK_kinase"/>
    <property type="match status" value="1"/>
</dbReference>
<dbReference type="Pfam" id="PF20423">
    <property type="entry name" value="AceK_regulatory"/>
    <property type="match status" value="1"/>
</dbReference>
<dbReference type="PIRSF" id="PIRSF000719">
    <property type="entry name" value="AceK"/>
    <property type="match status" value="1"/>
</dbReference>
<comment type="function">
    <text evidence="1">Bifunctional enzyme which can phosphorylate or dephosphorylate isocitrate dehydrogenase (IDH) on a specific serine residue. This is a regulatory mechanism which enables bacteria to bypass the Krebs cycle via the glyoxylate shunt in response to the source of carbon. When bacteria are grown on glucose, IDH is fully active and unphosphorylated, but when grown on acetate or ethanol, the activity of IDH declines drastically concomitant with its phosphorylation.</text>
</comment>
<comment type="catalytic activity">
    <reaction evidence="1">
        <text>L-seryl-[isocitrate dehydrogenase] + ATP = O-phospho-L-seryl-[isocitrate dehydrogenase] + ADP + H(+)</text>
        <dbReference type="Rhea" id="RHEA:43540"/>
        <dbReference type="Rhea" id="RHEA-COMP:10605"/>
        <dbReference type="Rhea" id="RHEA-COMP:10606"/>
        <dbReference type="ChEBI" id="CHEBI:15378"/>
        <dbReference type="ChEBI" id="CHEBI:29999"/>
        <dbReference type="ChEBI" id="CHEBI:30616"/>
        <dbReference type="ChEBI" id="CHEBI:83421"/>
        <dbReference type="ChEBI" id="CHEBI:456216"/>
        <dbReference type="EC" id="2.7.11.5"/>
    </reaction>
</comment>
<comment type="subcellular location">
    <subcellularLocation>
        <location evidence="1">Cytoplasm</location>
    </subcellularLocation>
</comment>
<comment type="similarity">
    <text evidence="1">Belongs to the AceK family.</text>
</comment>
<name>ACEK_BURP1</name>
<gene>
    <name evidence="1" type="primary">aceK</name>
    <name type="ordered locus">BURPS1710b_0581</name>
</gene>
<proteinExistence type="inferred from homology"/>
<evidence type="ECO:0000255" key="1">
    <source>
        <dbReference type="HAMAP-Rule" id="MF_00747"/>
    </source>
</evidence>
<feature type="chain" id="PRO_0000259146" description="Isocitrate dehydrogenase kinase/phosphatase">
    <location>
        <begin position="1"/>
        <end position="603"/>
    </location>
</feature>
<feature type="active site" evidence="1">
    <location>
        <position position="383"/>
    </location>
</feature>
<feature type="binding site" evidence="1">
    <location>
        <begin position="327"/>
        <end position="333"/>
    </location>
    <ligand>
        <name>ATP</name>
        <dbReference type="ChEBI" id="CHEBI:30616"/>
    </ligand>
</feature>
<feature type="binding site" evidence="1">
    <location>
        <position position="348"/>
    </location>
    <ligand>
        <name>ATP</name>
        <dbReference type="ChEBI" id="CHEBI:30616"/>
    </ligand>
</feature>
<reference key="1">
    <citation type="journal article" date="2010" name="Genome Biol. Evol.">
        <title>Continuing evolution of Burkholderia mallei through genome reduction and large-scale rearrangements.</title>
        <authorList>
            <person name="Losada L."/>
            <person name="Ronning C.M."/>
            <person name="DeShazer D."/>
            <person name="Woods D."/>
            <person name="Fedorova N."/>
            <person name="Kim H.S."/>
            <person name="Shabalina S.A."/>
            <person name="Pearson T.R."/>
            <person name="Brinkac L."/>
            <person name="Tan P."/>
            <person name="Nandi T."/>
            <person name="Crabtree J."/>
            <person name="Badger J."/>
            <person name="Beckstrom-Sternberg S."/>
            <person name="Saqib M."/>
            <person name="Schutzer S.E."/>
            <person name="Keim P."/>
            <person name="Nierman W.C."/>
        </authorList>
    </citation>
    <scope>NUCLEOTIDE SEQUENCE [LARGE SCALE GENOMIC DNA]</scope>
    <source>
        <strain>1710b</strain>
    </source>
</reference>
<protein>
    <recommendedName>
        <fullName evidence="1">Isocitrate dehydrogenase kinase/phosphatase</fullName>
        <shortName evidence="1">IDH kinase/phosphatase</shortName>
        <shortName evidence="1">IDHK/P</shortName>
        <ecNumber evidence="1">2.7.11.5</ecNumber>
        <ecNumber evidence="1">3.1.3.-</ecNumber>
    </recommendedName>
</protein>
<organism>
    <name type="scientific">Burkholderia pseudomallei (strain 1710b)</name>
    <dbReference type="NCBI Taxonomy" id="320372"/>
    <lineage>
        <taxon>Bacteria</taxon>
        <taxon>Pseudomonadati</taxon>
        <taxon>Pseudomonadota</taxon>
        <taxon>Betaproteobacteria</taxon>
        <taxon>Burkholderiales</taxon>
        <taxon>Burkholderiaceae</taxon>
        <taxon>Burkholderia</taxon>
        <taxon>pseudomallei group</taxon>
    </lineage>
</organism>
<accession>Q3JWQ8</accession>
<sequence>MNHFPKLLSSQIGFDVAQTILENFDRHYRIFREAAVEAKDLFERADWHGLQRLARERITSYDDRVRECVELLEDEYDAENIDNEVWPQIKLHYIGLLTSHRQPECAETFFNSVCCKILHRAYFNNDFIFVRPAISTEYIENDEPAAKPTYRAYYPGSEGLAATLERIVTNFQLNPPFEDLERDIACIMQAIHDEFGAFDEAVNFQIHVLSSLFYRNKTAYVVGRIINGDRVLPFAVPIRHARAGILALDTVLLRRDQLKIIFSFSHSYFLVDMNVPSAYVQFLRSIMPGKPKAEIYTSVGLQKQGKNLFYRDLLHHLSHSSDRFIVAPGIKGLVMLVFTLPSFPYVFKMIKDHFPPPKDTTREQIMAKYLLVKRHDRLGRMADTLEYSSVALPLARLDDALVRELEKEVPSLIEYEGENLVIKHLYIERRMVPLNLYLQNGSDAEIEHGVREYGNAVKELMQANIFPGDMLYKNFGVTRHGRVVFYDYDEIEYLTDCNVRRVPPPRNDEDEMSGEPWYTVGPHDIFPETYAPFLLGDPRVREHFLAHHADFFDPQLWQDSKDRLLRGELPDFFAYEPALRFCIRYPERFAPGDAADGGKLAAA</sequence>